<name>MED30_DICDI</name>
<feature type="chain" id="PRO_0000363161" description="Putative mediator of RNA polymerase II transcription subunit 30">
    <location>
        <begin position="1"/>
        <end position="255"/>
    </location>
</feature>
<feature type="region of interest" description="Disordered" evidence="2">
    <location>
        <begin position="58"/>
        <end position="133"/>
    </location>
</feature>
<feature type="region of interest" description="Disordered" evidence="2">
    <location>
        <begin position="177"/>
        <end position="207"/>
    </location>
</feature>
<feature type="compositionally biased region" description="Low complexity" evidence="2">
    <location>
        <begin position="58"/>
        <end position="107"/>
    </location>
</feature>
<feature type="compositionally biased region" description="Polar residues" evidence="2">
    <location>
        <begin position="108"/>
        <end position="133"/>
    </location>
</feature>
<feature type="compositionally biased region" description="Basic and acidic residues" evidence="2">
    <location>
        <begin position="177"/>
        <end position="189"/>
    </location>
</feature>
<feature type="compositionally biased region" description="Low complexity" evidence="2">
    <location>
        <begin position="190"/>
        <end position="201"/>
    </location>
</feature>
<accession>Q86HS8</accession>
<accession>Q554Y7</accession>
<sequence>MDKIEIEEELICSLAVKGEKSIHKLLLNILAIVKQLKTIQSDPVLTYQVSTKAQQQLQSQQLQQPQSIPSSTNNSTNTNTNNSTTTTTTSSTSSTTTPTTTTSTTSPLNSKDSTATTTTKEQPSSPTLPTLNLNFVNDNDKIKELNQNCIQSILALQKTIKEISLLETKISQKPKDNIDNDDTIMKDDNNNSSTSAPTTTTINIEKQDQTSLSNELERLKMDAYQKNCVIKKLIDNMRLLQLSINSMNRTSTGTD</sequence>
<protein>
    <recommendedName>
        <fullName>Putative mediator of RNA polymerase II transcription subunit 30</fullName>
    </recommendedName>
    <alternativeName>
        <fullName>Mediator complex subunit 30</fullName>
    </alternativeName>
</protein>
<gene>
    <name type="primary">med30</name>
    <name type="ORF">DDB_G0274443</name>
</gene>
<proteinExistence type="inferred from homology"/>
<comment type="function">
    <text evidence="1">Component of the Mediator complex, a coactivator involved in the regulated transcription of nearly all RNA polymerase II-dependent genes. Mediator functions as a bridge to convey information from gene-specific regulatory proteins to the basal RNA polymerase II transcription machinery. Mediator is recruited to promoters by direct interactions with regulatory proteins and serves as a scaffold for the assembly of a functional preinitiation complex with RNA polymerase II and the general transcription factors (By similarity).</text>
</comment>
<comment type="subunit">
    <text evidence="1">Component of the Mediator complex.</text>
</comment>
<comment type="subcellular location">
    <subcellularLocation>
        <location evidence="1">Nucleus</location>
    </subcellularLocation>
</comment>
<comment type="similarity">
    <text evidence="3">Belongs to the Mediator complex subunit 30 family. Highly divergent.</text>
</comment>
<organism>
    <name type="scientific">Dictyostelium discoideum</name>
    <name type="common">Social amoeba</name>
    <dbReference type="NCBI Taxonomy" id="44689"/>
    <lineage>
        <taxon>Eukaryota</taxon>
        <taxon>Amoebozoa</taxon>
        <taxon>Evosea</taxon>
        <taxon>Eumycetozoa</taxon>
        <taxon>Dictyostelia</taxon>
        <taxon>Dictyosteliales</taxon>
        <taxon>Dictyosteliaceae</taxon>
        <taxon>Dictyostelium</taxon>
    </lineage>
</organism>
<evidence type="ECO:0000250" key="1"/>
<evidence type="ECO:0000256" key="2">
    <source>
        <dbReference type="SAM" id="MobiDB-lite"/>
    </source>
</evidence>
<evidence type="ECO:0000305" key="3"/>
<dbReference type="EMBL" id="AAFI02000012">
    <property type="protein sequence ID" value="EAL70114.1"/>
    <property type="molecule type" value="Genomic_DNA"/>
</dbReference>
<dbReference type="RefSeq" id="XP_644186.1">
    <property type="nucleotide sequence ID" value="XM_639094.1"/>
</dbReference>
<dbReference type="SMR" id="Q86HS8"/>
<dbReference type="FunCoup" id="Q86HS8">
    <property type="interactions" value="744"/>
</dbReference>
<dbReference type="PaxDb" id="44689-DDB0266951"/>
<dbReference type="EnsemblProtists" id="EAL70114">
    <property type="protein sequence ID" value="EAL70114"/>
    <property type="gene ID" value="DDB_G0274443"/>
</dbReference>
<dbReference type="GeneID" id="8619615"/>
<dbReference type="KEGG" id="ddi:DDB_G0274443"/>
<dbReference type="dictyBase" id="DDB_G0274443">
    <property type="gene designation" value="med30"/>
</dbReference>
<dbReference type="VEuPathDB" id="AmoebaDB:DDB_G0274443"/>
<dbReference type="eggNOG" id="ENOG502RHNM">
    <property type="taxonomic scope" value="Eukaryota"/>
</dbReference>
<dbReference type="HOGENOM" id="CLU_1091652_0_0_1"/>
<dbReference type="InParanoid" id="Q86HS8"/>
<dbReference type="OMA" id="MEHNTNI"/>
<dbReference type="PRO" id="PR:Q86HS8"/>
<dbReference type="Proteomes" id="UP000002195">
    <property type="component" value="Chromosome 2"/>
</dbReference>
<dbReference type="GO" id="GO:0005634">
    <property type="term" value="C:nucleus"/>
    <property type="evidence" value="ECO:0007669"/>
    <property type="project" value="UniProtKB-SubCell"/>
</dbReference>
<keyword id="KW-0010">Activator</keyword>
<keyword id="KW-0175">Coiled coil</keyword>
<keyword id="KW-0539">Nucleus</keyword>
<keyword id="KW-1185">Reference proteome</keyword>
<keyword id="KW-0804">Transcription</keyword>
<keyword id="KW-0805">Transcription regulation</keyword>
<reference key="1">
    <citation type="journal article" date="2002" name="Nature">
        <title>Sequence and analysis of chromosome 2 of Dictyostelium discoideum.</title>
        <authorList>
            <person name="Gloeckner G."/>
            <person name="Eichinger L."/>
            <person name="Szafranski K."/>
            <person name="Pachebat J.A."/>
            <person name="Bankier A.T."/>
            <person name="Dear P.H."/>
            <person name="Lehmann R."/>
            <person name="Baumgart C."/>
            <person name="Parra G."/>
            <person name="Abril J.F."/>
            <person name="Guigo R."/>
            <person name="Kumpf K."/>
            <person name="Tunggal B."/>
            <person name="Cox E.C."/>
            <person name="Quail M.A."/>
            <person name="Platzer M."/>
            <person name="Rosenthal A."/>
            <person name="Noegel A.A."/>
        </authorList>
    </citation>
    <scope>NUCLEOTIDE SEQUENCE [LARGE SCALE GENOMIC DNA]</scope>
    <source>
        <strain>AX4</strain>
    </source>
</reference>
<reference key="2">
    <citation type="journal article" date="2005" name="Nature">
        <title>The genome of the social amoeba Dictyostelium discoideum.</title>
        <authorList>
            <person name="Eichinger L."/>
            <person name="Pachebat J.A."/>
            <person name="Gloeckner G."/>
            <person name="Rajandream M.A."/>
            <person name="Sucgang R."/>
            <person name="Berriman M."/>
            <person name="Song J."/>
            <person name="Olsen R."/>
            <person name="Szafranski K."/>
            <person name="Xu Q."/>
            <person name="Tunggal B."/>
            <person name="Kummerfeld S."/>
            <person name="Madera M."/>
            <person name="Konfortov B.A."/>
            <person name="Rivero F."/>
            <person name="Bankier A.T."/>
            <person name="Lehmann R."/>
            <person name="Hamlin N."/>
            <person name="Davies R."/>
            <person name="Gaudet P."/>
            <person name="Fey P."/>
            <person name="Pilcher K."/>
            <person name="Chen G."/>
            <person name="Saunders D."/>
            <person name="Sodergren E.J."/>
            <person name="Davis P."/>
            <person name="Kerhornou A."/>
            <person name="Nie X."/>
            <person name="Hall N."/>
            <person name="Anjard C."/>
            <person name="Hemphill L."/>
            <person name="Bason N."/>
            <person name="Farbrother P."/>
            <person name="Desany B."/>
            <person name="Just E."/>
            <person name="Morio T."/>
            <person name="Rost R."/>
            <person name="Churcher C.M."/>
            <person name="Cooper J."/>
            <person name="Haydock S."/>
            <person name="van Driessche N."/>
            <person name="Cronin A."/>
            <person name="Goodhead I."/>
            <person name="Muzny D.M."/>
            <person name="Mourier T."/>
            <person name="Pain A."/>
            <person name="Lu M."/>
            <person name="Harper D."/>
            <person name="Lindsay R."/>
            <person name="Hauser H."/>
            <person name="James K.D."/>
            <person name="Quiles M."/>
            <person name="Madan Babu M."/>
            <person name="Saito T."/>
            <person name="Buchrieser C."/>
            <person name="Wardroper A."/>
            <person name="Felder M."/>
            <person name="Thangavelu M."/>
            <person name="Johnson D."/>
            <person name="Knights A."/>
            <person name="Loulseged H."/>
            <person name="Mungall K.L."/>
            <person name="Oliver K."/>
            <person name="Price C."/>
            <person name="Quail M.A."/>
            <person name="Urushihara H."/>
            <person name="Hernandez J."/>
            <person name="Rabbinowitsch E."/>
            <person name="Steffen D."/>
            <person name="Sanders M."/>
            <person name="Ma J."/>
            <person name="Kohara Y."/>
            <person name="Sharp S."/>
            <person name="Simmonds M.N."/>
            <person name="Spiegler S."/>
            <person name="Tivey A."/>
            <person name="Sugano S."/>
            <person name="White B."/>
            <person name="Walker D."/>
            <person name="Woodward J.R."/>
            <person name="Winckler T."/>
            <person name="Tanaka Y."/>
            <person name="Shaulsky G."/>
            <person name="Schleicher M."/>
            <person name="Weinstock G.M."/>
            <person name="Rosenthal A."/>
            <person name="Cox E.C."/>
            <person name="Chisholm R.L."/>
            <person name="Gibbs R.A."/>
            <person name="Loomis W.F."/>
            <person name="Platzer M."/>
            <person name="Kay R.R."/>
            <person name="Williams J.G."/>
            <person name="Dear P.H."/>
            <person name="Noegel A.A."/>
            <person name="Barrell B.G."/>
            <person name="Kuspa A."/>
        </authorList>
    </citation>
    <scope>NUCLEOTIDE SEQUENCE [LARGE SCALE GENOMIC DNA]</scope>
    <source>
        <strain>AX4</strain>
    </source>
</reference>
<reference key="3">
    <citation type="journal article" date="2008" name="Nucleic Acids Res.">
        <title>Comparative genomics supports a deep evolutionary origin for the large, four-module transcriptional mediator complex.</title>
        <authorList>
            <person name="Bourbon H.-M."/>
        </authorList>
    </citation>
    <scope>NOMENCLATURE</scope>
</reference>